<feature type="chain" id="PRO_0000288352" description="Proline--tRNA ligase">
    <location>
        <begin position="1"/>
        <end position="584"/>
    </location>
</feature>
<gene>
    <name evidence="1" type="primary">proS</name>
    <name type="ordered locus">Mmcs_2076</name>
</gene>
<dbReference type="EC" id="6.1.1.15" evidence="1"/>
<dbReference type="EMBL" id="CP000384">
    <property type="protein sequence ID" value="ABG08184.1"/>
    <property type="molecule type" value="Genomic_DNA"/>
</dbReference>
<dbReference type="SMR" id="Q1BAA0"/>
<dbReference type="KEGG" id="mmc:Mmcs_2076"/>
<dbReference type="HOGENOM" id="CLU_016739_0_0_11"/>
<dbReference type="BioCyc" id="MSP164756:G1G6O-2122-MONOMER"/>
<dbReference type="GO" id="GO:0005829">
    <property type="term" value="C:cytosol"/>
    <property type="evidence" value="ECO:0007669"/>
    <property type="project" value="TreeGrafter"/>
</dbReference>
<dbReference type="GO" id="GO:0002161">
    <property type="term" value="F:aminoacyl-tRNA deacylase activity"/>
    <property type="evidence" value="ECO:0007669"/>
    <property type="project" value="InterPro"/>
</dbReference>
<dbReference type="GO" id="GO:0005524">
    <property type="term" value="F:ATP binding"/>
    <property type="evidence" value="ECO:0007669"/>
    <property type="project" value="UniProtKB-UniRule"/>
</dbReference>
<dbReference type="GO" id="GO:0004827">
    <property type="term" value="F:proline-tRNA ligase activity"/>
    <property type="evidence" value="ECO:0007669"/>
    <property type="project" value="UniProtKB-UniRule"/>
</dbReference>
<dbReference type="GO" id="GO:0006433">
    <property type="term" value="P:prolyl-tRNA aminoacylation"/>
    <property type="evidence" value="ECO:0007669"/>
    <property type="project" value="UniProtKB-UniRule"/>
</dbReference>
<dbReference type="CDD" id="cd00861">
    <property type="entry name" value="ProRS_anticodon_short"/>
    <property type="match status" value="1"/>
</dbReference>
<dbReference type="CDD" id="cd00779">
    <property type="entry name" value="ProRS_core_prok"/>
    <property type="match status" value="1"/>
</dbReference>
<dbReference type="FunFam" id="3.30.930.10:FF:000065">
    <property type="entry name" value="Proline--tRNA ligase"/>
    <property type="match status" value="1"/>
</dbReference>
<dbReference type="FunFam" id="3.30.930.10:FF:000070">
    <property type="entry name" value="Proline--tRNA ligase"/>
    <property type="match status" value="1"/>
</dbReference>
<dbReference type="Gene3D" id="3.40.50.800">
    <property type="entry name" value="Anticodon-binding domain"/>
    <property type="match status" value="1"/>
</dbReference>
<dbReference type="Gene3D" id="3.30.930.10">
    <property type="entry name" value="Bira Bifunctional Protein, Domain 2"/>
    <property type="match status" value="2"/>
</dbReference>
<dbReference type="Gene3D" id="3.90.960.10">
    <property type="entry name" value="YbaK/aminoacyl-tRNA synthetase-associated domain"/>
    <property type="match status" value="1"/>
</dbReference>
<dbReference type="HAMAP" id="MF_01569">
    <property type="entry name" value="Pro_tRNA_synth_type1"/>
    <property type="match status" value="1"/>
</dbReference>
<dbReference type="InterPro" id="IPR002314">
    <property type="entry name" value="aa-tRNA-synt_IIb"/>
</dbReference>
<dbReference type="InterPro" id="IPR006195">
    <property type="entry name" value="aa-tRNA-synth_II"/>
</dbReference>
<dbReference type="InterPro" id="IPR045864">
    <property type="entry name" value="aa-tRNA-synth_II/BPL/LPL"/>
</dbReference>
<dbReference type="InterPro" id="IPR004154">
    <property type="entry name" value="Anticodon-bd"/>
</dbReference>
<dbReference type="InterPro" id="IPR036621">
    <property type="entry name" value="Anticodon-bd_dom_sf"/>
</dbReference>
<dbReference type="InterPro" id="IPR002316">
    <property type="entry name" value="Pro-tRNA-ligase_IIa"/>
</dbReference>
<dbReference type="InterPro" id="IPR004500">
    <property type="entry name" value="Pro-tRNA-synth_IIa_bac-type"/>
</dbReference>
<dbReference type="InterPro" id="IPR023717">
    <property type="entry name" value="Pro-tRNA-Synthase_IIa_type1"/>
</dbReference>
<dbReference type="InterPro" id="IPR050062">
    <property type="entry name" value="Pro-tRNA_synthetase"/>
</dbReference>
<dbReference type="InterPro" id="IPR044140">
    <property type="entry name" value="ProRS_anticodon_short"/>
</dbReference>
<dbReference type="InterPro" id="IPR033730">
    <property type="entry name" value="ProRS_core_prok"/>
</dbReference>
<dbReference type="InterPro" id="IPR036754">
    <property type="entry name" value="YbaK/aa-tRNA-synt-asso_dom_sf"/>
</dbReference>
<dbReference type="InterPro" id="IPR007214">
    <property type="entry name" value="YbaK/aa-tRNA-synth-assoc-dom"/>
</dbReference>
<dbReference type="NCBIfam" id="NF006625">
    <property type="entry name" value="PRK09194.1"/>
    <property type="match status" value="1"/>
</dbReference>
<dbReference type="NCBIfam" id="TIGR00409">
    <property type="entry name" value="proS_fam_II"/>
    <property type="match status" value="1"/>
</dbReference>
<dbReference type="PANTHER" id="PTHR42753">
    <property type="entry name" value="MITOCHONDRIAL RIBOSOME PROTEIN L39/PROLYL-TRNA LIGASE FAMILY MEMBER"/>
    <property type="match status" value="1"/>
</dbReference>
<dbReference type="PANTHER" id="PTHR42753:SF2">
    <property type="entry name" value="PROLINE--TRNA LIGASE"/>
    <property type="match status" value="1"/>
</dbReference>
<dbReference type="Pfam" id="PF03129">
    <property type="entry name" value="HGTP_anticodon"/>
    <property type="match status" value="1"/>
</dbReference>
<dbReference type="Pfam" id="PF00587">
    <property type="entry name" value="tRNA-synt_2b"/>
    <property type="match status" value="1"/>
</dbReference>
<dbReference type="Pfam" id="PF04073">
    <property type="entry name" value="tRNA_edit"/>
    <property type="match status" value="1"/>
</dbReference>
<dbReference type="PRINTS" id="PR01046">
    <property type="entry name" value="TRNASYNTHPRO"/>
</dbReference>
<dbReference type="SUPFAM" id="SSF52954">
    <property type="entry name" value="Class II aaRS ABD-related"/>
    <property type="match status" value="1"/>
</dbReference>
<dbReference type="SUPFAM" id="SSF55681">
    <property type="entry name" value="Class II aaRS and biotin synthetases"/>
    <property type="match status" value="1"/>
</dbReference>
<dbReference type="SUPFAM" id="SSF55826">
    <property type="entry name" value="YbaK/ProRS associated domain"/>
    <property type="match status" value="1"/>
</dbReference>
<dbReference type="PROSITE" id="PS50862">
    <property type="entry name" value="AA_TRNA_LIGASE_II"/>
    <property type="match status" value="1"/>
</dbReference>
<keyword id="KW-0030">Aminoacyl-tRNA synthetase</keyword>
<keyword id="KW-0067">ATP-binding</keyword>
<keyword id="KW-0963">Cytoplasm</keyword>
<keyword id="KW-0436">Ligase</keyword>
<keyword id="KW-0547">Nucleotide-binding</keyword>
<keyword id="KW-0648">Protein biosynthesis</keyword>
<proteinExistence type="inferred from homology"/>
<accession>Q1BAA0</accession>
<sequence length="584" mass="63945">MITRMSELFLRTLRDDPADAEVPSHKLLIRAGYVRPVGPGLYTWLPLGLRVFRKIEQIVRDEMTAIGGQEILFPALLPRAPYETTNRWTEYGDTLFRLKDRRDNDYLLGPTHEELFTLTVKGEYSSYKDFPLILFQIQTKYRDEARPRAGILRGREFVMKDSYSFDVDDDGLKTAYHLHREAYQRIFARLGVHYVIVSAVSGAMGGSASEEFLAESEVGEDTFVRCLQSGYAANVEAVLTRVPEPLPIEGQPEAVVYDTPDAPTIATLVDWANGADLPNFAGRAVTAADTLKNVLVKVREPGGEWELLAVGVPGDREVDDKRLGAALEPAEYALLDEADFARHPFLVKGYVGPKALLDNGVRYLVDPRVVDGTAWITGADAPNKHVVGLVAGRDFVADGTIEAAEVRDGDPSPDGAGPLVSARGIEIGHIFQLGRKYTEAFSADVLGEDGKPVRLTMGSYGIGVSRLVAVIAEQQHDELGLRWPAAVAPFDVHVVIANKDDGARTGATELAGELDRLGLEVLLDDRKSSPGVKFKDAELLGVPWIVVVGRGWGDGVVELRDRFSGEKREIGVDDAATEILATVR</sequence>
<evidence type="ECO:0000255" key="1">
    <source>
        <dbReference type="HAMAP-Rule" id="MF_01569"/>
    </source>
</evidence>
<organism>
    <name type="scientific">Mycobacterium sp. (strain MCS)</name>
    <dbReference type="NCBI Taxonomy" id="164756"/>
    <lineage>
        <taxon>Bacteria</taxon>
        <taxon>Bacillati</taxon>
        <taxon>Actinomycetota</taxon>
        <taxon>Actinomycetes</taxon>
        <taxon>Mycobacteriales</taxon>
        <taxon>Mycobacteriaceae</taxon>
        <taxon>Mycobacterium</taxon>
    </lineage>
</organism>
<comment type="function">
    <text evidence="1">Catalyzes the attachment of proline to tRNA(Pro) in a two-step reaction: proline is first activated by ATP to form Pro-AMP and then transferred to the acceptor end of tRNA(Pro). As ProRS can inadvertently accommodate and process non-cognate amino acids such as alanine and cysteine, to avoid such errors it has two additional distinct editing activities against alanine. One activity is designated as 'pretransfer' editing and involves the tRNA(Pro)-independent hydrolysis of activated Ala-AMP. The other activity is designated 'posttransfer' editing and involves deacylation of mischarged Ala-tRNA(Pro). The misacylated Cys-tRNA(Pro) is not edited by ProRS.</text>
</comment>
<comment type="catalytic activity">
    <reaction evidence="1">
        <text>tRNA(Pro) + L-proline + ATP = L-prolyl-tRNA(Pro) + AMP + diphosphate</text>
        <dbReference type="Rhea" id="RHEA:14305"/>
        <dbReference type="Rhea" id="RHEA-COMP:9700"/>
        <dbReference type="Rhea" id="RHEA-COMP:9702"/>
        <dbReference type="ChEBI" id="CHEBI:30616"/>
        <dbReference type="ChEBI" id="CHEBI:33019"/>
        <dbReference type="ChEBI" id="CHEBI:60039"/>
        <dbReference type="ChEBI" id="CHEBI:78442"/>
        <dbReference type="ChEBI" id="CHEBI:78532"/>
        <dbReference type="ChEBI" id="CHEBI:456215"/>
        <dbReference type="EC" id="6.1.1.15"/>
    </reaction>
</comment>
<comment type="subunit">
    <text evidence="1">Homodimer.</text>
</comment>
<comment type="subcellular location">
    <subcellularLocation>
        <location evidence="1">Cytoplasm</location>
    </subcellularLocation>
</comment>
<comment type="domain">
    <text evidence="1">Consists of three domains: the N-terminal catalytic domain, the editing domain and the C-terminal anticodon-binding domain.</text>
</comment>
<comment type="similarity">
    <text evidence="1">Belongs to the class-II aminoacyl-tRNA synthetase family. ProS type 1 subfamily.</text>
</comment>
<reference key="1">
    <citation type="submission" date="2006-06" db="EMBL/GenBank/DDBJ databases">
        <title>Complete sequence of chromosome of Mycobacterium sp. MCS.</title>
        <authorList>
            <consortium name="US DOE Joint Genome Institute"/>
            <person name="Copeland A."/>
            <person name="Lucas S."/>
            <person name="Lapidus A."/>
            <person name="Barry K."/>
            <person name="Detter J.C."/>
            <person name="Glavina del Rio T."/>
            <person name="Hammon N."/>
            <person name="Israni S."/>
            <person name="Dalin E."/>
            <person name="Tice H."/>
            <person name="Pitluck S."/>
            <person name="Martinez M."/>
            <person name="Schmutz J."/>
            <person name="Larimer F."/>
            <person name="Land M."/>
            <person name="Hauser L."/>
            <person name="Kyrpides N."/>
            <person name="Kim E."/>
            <person name="Miller C.D."/>
            <person name="Hughes J.E."/>
            <person name="Anderson A.J."/>
            <person name="Sims R.C."/>
            <person name="Richardson P."/>
        </authorList>
    </citation>
    <scope>NUCLEOTIDE SEQUENCE [LARGE SCALE GENOMIC DNA]</scope>
    <source>
        <strain>MCS</strain>
    </source>
</reference>
<name>SYP_MYCSS</name>
<protein>
    <recommendedName>
        <fullName evidence="1">Proline--tRNA ligase</fullName>
        <ecNumber evidence="1">6.1.1.15</ecNumber>
    </recommendedName>
    <alternativeName>
        <fullName evidence="1">Prolyl-tRNA synthetase</fullName>
        <shortName evidence="1">ProRS</shortName>
    </alternativeName>
</protein>